<keyword id="KW-0030">Aminoacyl-tRNA synthetase</keyword>
<keyword id="KW-0067">ATP-binding</keyword>
<keyword id="KW-0963">Cytoplasm</keyword>
<keyword id="KW-0436">Ligase</keyword>
<keyword id="KW-0547">Nucleotide-binding</keyword>
<keyword id="KW-0648">Protein biosynthesis</keyword>
<comment type="catalytic activity">
    <reaction evidence="1">
        <text>tRNA(Arg) + L-arginine + ATP = L-arginyl-tRNA(Arg) + AMP + diphosphate</text>
        <dbReference type="Rhea" id="RHEA:20301"/>
        <dbReference type="Rhea" id="RHEA-COMP:9658"/>
        <dbReference type="Rhea" id="RHEA-COMP:9673"/>
        <dbReference type="ChEBI" id="CHEBI:30616"/>
        <dbReference type="ChEBI" id="CHEBI:32682"/>
        <dbReference type="ChEBI" id="CHEBI:33019"/>
        <dbReference type="ChEBI" id="CHEBI:78442"/>
        <dbReference type="ChEBI" id="CHEBI:78513"/>
        <dbReference type="ChEBI" id="CHEBI:456215"/>
        <dbReference type="EC" id="6.1.1.19"/>
    </reaction>
</comment>
<comment type="subunit">
    <text evidence="1">Monomer.</text>
</comment>
<comment type="subcellular location">
    <subcellularLocation>
        <location evidence="1">Cytoplasm</location>
    </subcellularLocation>
</comment>
<comment type="similarity">
    <text evidence="1">Belongs to the class-I aminoacyl-tRNA synthetase family.</text>
</comment>
<gene>
    <name evidence="1" type="primary">argS</name>
    <name type="ordered locus">BH09980</name>
</gene>
<organism>
    <name type="scientific">Bartonella henselae (strain ATCC 49882 / DSM 28221 / CCUG 30454 / Houston 1)</name>
    <name type="common">Rochalimaea henselae</name>
    <dbReference type="NCBI Taxonomy" id="283166"/>
    <lineage>
        <taxon>Bacteria</taxon>
        <taxon>Pseudomonadati</taxon>
        <taxon>Pseudomonadota</taxon>
        <taxon>Alphaproteobacteria</taxon>
        <taxon>Hyphomicrobiales</taxon>
        <taxon>Bartonellaceae</taxon>
        <taxon>Bartonella</taxon>
    </lineage>
</organism>
<reference key="1">
    <citation type="journal article" date="2004" name="Proc. Natl. Acad. Sci. U.S.A.">
        <title>The louse-borne human pathogen Bartonella quintana is a genomic derivative of the zoonotic agent Bartonella henselae.</title>
        <authorList>
            <person name="Alsmark U.C.M."/>
            <person name="Frank A.C."/>
            <person name="Karlberg E.O."/>
            <person name="Legault B.-A."/>
            <person name="Ardell D.H."/>
            <person name="Canbaeck B."/>
            <person name="Eriksson A.-S."/>
            <person name="Naeslund A.K."/>
            <person name="Handley S.A."/>
            <person name="Huvet M."/>
            <person name="La Scola B."/>
            <person name="Holmberg M."/>
            <person name="Andersson S.G.E."/>
        </authorList>
    </citation>
    <scope>NUCLEOTIDE SEQUENCE [LARGE SCALE GENOMIC DNA]</scope>
    <source>
        <strain>ATCC 49882 / DSM 28221 / CCUG 30454 / Houston 1</strain>
    </source>
</reference>
<name>SYR_BARHE</name>
<evidence type="ECO:0000255" key="1">
    <source>
        <dbReference type="HAMAP-Rule" id="MF_00123"/>
    </source>
</evidence>
<feature type="chain" id="PRO_0000241988" description="Arginine--tRNA ligase">
    <location>
        <begin position="1"/>
        <end position="585"/>
    </location>
</feature>
<feature type="short sequence motif" description="'HIGH' region">
    <location>
        <begin position="131"/>
        <end position="141"/>
    </location>
</feature>
<protein>
    <recommendedName>
        <fullName evidence="1">Arginine--tRNA ligase</fullName>
        <ecNumber evidence="1">6.1.1.19</ecNumber>
    </recommendedName>
    <alternativeName>
        <fullName evidence="1">Arginyl-tRNA synthetase</fullName>
        <shortName evidence="1">ArgRS</shortName>
    </alternativeName>
</protein>
<dbReference type="EC" id="6.1.1.19" evidence="1"/>
<dbReference type="EMBL" id="BX897699">
    <property type="protein sequence ID" value="CAF27790.1"/>
    <property type="molecule type" value="Genomic_DNA"/>
</dbReference>
<dbReference type="RefSeq" id="WP_011180864.1">
    <property type="nucleotide sequence ID" value="NZ_LRIJ02000001.1"/>
</dbReference>
<dbReference type="SMR" id="Q6G316"/>
<dbReference type="PaxDb" id="283166-BH09980"/>
<dbReference type="EnsemblBacteria" id="CAF27790">
    <property type="protein sequence ID" value="CAF27790"/>
    <property type="gene ID" value="BH09980"/>
</dbReference>
<dbReference type="GeneID" id="92985315"/>
<dbReference type="KEGG" id="bhe:BH09980"/>
<dbReference type="eggNOG" id="COG0018">
    <property type="taxonomic scope" value="Bacteria"/>
</dbReference>
<dbReference type="OrthoDB" id="9803211at2"/>
<dbReference type="Proteomes" id="UP000000421">
    <property type="component" value="Chromosome"/>
</dbReference>
<dbReference type="GO" id="GO:0005737">
    <property type="term" value="C:cytoplasm"/>
    <property type="evidence" value="ECO:0007669"/>
    <property type="project" value="UniProtKB-SubCell"/>
</dbReference>
<dbReference type="GO" id="GO:0004814">
    <property type="term" value="F:arginine-tRNA ligase activity"/>
    <property type="evidence" value="ECO:0007669"/>
    <property type="project" value="UniProtKB-UniRule"/>
</dbReference>
<dbReference type="GO" id="GO:0005524">
    <property type="term" value="F:ATP binding"/>
    <property type="evidence" value="ECO:0007669"/>
    <property type="project" value="UniProtKB-UniRule"/>
</dbReference>
<dbReference type="GO" id="GO:0006420">
    <property type="term" value="P:arginyl-tRNA aminoacylation"/>
    <property type="evidence" value="ECO:0007669"/>
    <property type="project" value="UniProtKB-UniRule"/>
</dbReference>
<dbReference type="CDD" id="cd00671">
    <property type="entry name" value="ArgRS_core"/>
    <property type="match status" value="1"/>
</dbReference>
<dbReference type="FunFam" id="3.40.50.620:FF:000062">
    <property type="entry name" value="Arginine--tRNA ligase"/>
    <property type="match status" value="1"/>
</dbReference>
<dbReference type="Gene3D" id="3.30.1360.70">
    <property type="entry name" value="Arginyl tRNA synthetase N-terminal domain"/>
    <property type="match status" value="1"/>
</dbReference>
<dbReference type="Gene3D" id="3.40.50.620">
    <property type="entry name" value="HUPs"/>
    <property type="match status" value="1"/>
</dbReference>
<dbReference type="Gene3D" id="1.10.730.10">
    <property type="entry name" value="Isoleucyl-tRNA Synthetase, Domain 1"/>
    <property type="match status" value="1"/>
</dbReference>
<dbReference type="HAMAP" id="MF_00123">
    <property type="entry name" value="Arg_tRNA_synth"/>
    <property type="match status" value="1"/>
</dbReference>
<dbReference type="InterPro" id="IPR001412">
    <property type="entry name" value="aa-tRNA-synth_I_CS"/>
</dbReference>
<dbReference type="InterPro" id="IPR001278">
    <property type="entry name" value="Arg-tRNA-ligase"/>
</dbReference>
<dbReference type="InterPro" id="IPR005148">
    <property type="entry name" value="Arg-tRNA-synth_N"/>
</dbReference>
<dbReference type="InterPro" id="IPR036695">
    <property type="entry name" value="Arg-tRNA-synth_N_sf"/>
</dbReference>
<dbReference type="InterPro" id="IPR035684">
    <property type="entry name" value="ArgRS_core"/>
</dbReference>
<dbReference type="InterPro" id="IPR008909">
    <property type="entry name" value="DALR_anticod-bd"/>
</dbReference>
<dbReference type="InterPro" id="IPR014729">
    <property type="entry name" value="Rossmann-like_a/b/a_fold"/>
</dbReference>
<dbReference type="InterPro" id="IPR009080">
    <property type="entry name" value="tRNAsynth_Ia_anticodon-bd"/>
</dbReference>
<dbReference type="NCBIfam" id="TIGR00456">
    <property type="entry name" value="argS"/>
    <property type="match status" value="1"/>
</dbReference>
<dbReference type="PANTHER" id="PTHR11956:SF5">
    <property type="entry name" value="ARGININE--TRNA LIGASE, CYTOPLASMIC"/>
    <property type="match status" value="1"/>
</dbReference>
<dbReference type="PANTHER" id="PTHR11956">
    <property type="entry name" value="ARGINYL-TRNA SYNTHETASE"/>
    <property type="match status" value="1"/>
</dbReference>
<dbReference type="Pfam" id="PF03485">
    <property type="entry name" value="Arg_tRNA_synt_N"/>
    <property type="match status" value="1"/>
</dbReference>
<dbReference type="Pfam" id="PF05746">
    <property type="entry name" value="DALR_1"/>
    <property type="match status" value="1"/>
</dbReference>
<dbReference type="Pfam" id="PF00750">
    <property type="entry name" value="tRNA-synt_1d"/>
    <property type="match status" value="2"/>
</dbReference>
<dbReference type="PRINTS" id="PR01038">
    <property type="entry name" value="TRNASYNTHARG"/>
</dbReference>
<dbReference type="SMART" id="SM01016">
    <property type="entry name" value="Arg_tRNA_synt_N"/>
    <property type="match status" value="1"/>
</dbReference>
<dbReference type="SMART" id="SM00836">
    <property type="entry name" value="DALR_1"/>
    <property type="match status" value="1"/>
</dbReference>
<dbReference type="SUPFAM" id="SSF47323">
    <property type="entry name" value="Anticodon-binding domain of a subclass of class I aminoacyl-tRNA synthetases"/>
    <property type="match status" value="1"/>
</dbReference>
<dbReference type="SUPFAM" id="SSF55190">
    <property type="entry name" value="Arginyl-tRNA synthetase (ArgRS), N-terminal 'additional' domain"/>
    <property type="match status" value="1"/>
</dbReference>
<dbReference type="SUPFAM" id="SSF52374">
    <property type="entry name" value="Nucleotidylyl transferase"/>
    <property type="match status" value="1"/>
</dbReference>
<dbReference type="PROSITE" id="PS00178">
    <property type="entry name" value="AA_TRNA_LIGASE_I"/>
    <property type="match status" value="1"/>
</dbReference>
<proteinExistence type="inferred from homology"/>
<sequence length="585" mass="66328">MNVFKNFEKKIKKSLESSDIKGKNGEDLDLSKITVDPPRDSSHGHLSTNAAMVLAKSTGLNPRALAEKIIELLKNDPSVESINVAGPGFINIKLTKPFWQDLIKSMLEKGISYGRIPMGQGKRINVEYVSANPTGPMHVGHCRGAVVGDVLSNLLQFVGYNITKEYYINDAGKQIEVLAHSVLLRYREALGQKINEIPEGLYPGEYLIPLGQSLAQEFGDKLLTIDKEEALSIVKERAIHEMMSMIRKDLAALNIYHDIFFSERMLYADNARAIRNTINDLTLKGYIYKGKLPPPKGQNTEDWEPCEQTLFRSTDVGDDQDRVLIKSDGSYTYFAADVAYFRDKFNRHFDEMIYILGADHAGYVKRLEAMAKAISNDKAKLSVFLCQLVKLFRNGHPVRMSKRAGSFVTLRDVVEEVGSDPVRFMMLYRKCEAPLDFDFAKVTEQSKDNPIFYVQYASARCHSVFRQAQETLCIENISNDKIIEHLNRLTDDNEIFLIRKLSEYPRIIEQAVVHKEPHRLAFYLYDLASSFHTHWNKGSDNLNLRFIQPDDRNLSFARLGLIQAIMNILSSGLAIVGIKAATEMR</sequence>
<accession>Q6G316</accession>